<protein>
    <recommendedName>
        <fullName evidence="1">Peptidyl-tRNA hydrolase</fullName>
        <shortName evidence="1">Pth</shortName>
        <ecNumber evidence="1">3.1.1.29</ecNumber>
    </recommendedName>
</protein>
<organism>
    <name type="scientific">Lacticaseibacillus casei (strain BL23)</name>
    <name type="common">Lactobacillus casei</name>
    <dbReference type="NCBI Taxonomy" id="543734"/>
    <lineage>
        <taxon>Bacteria</taxon>
        <taxon>Bacillati</taxon>
        <taxon>Bacillota</taxon>
        <taxon>Bacilli</taxon>
        <taxon>Lactobacillales</taxon>
        <taxon>Lactobacillaceae</taxon>
        <taxon>Lacticaseibacillus</taxon>
    </lineage>
</organism>
<evidence type="ECO:0000255" key="1">
    <source>
        <dbReference type="HAMAP-Rule" id="MF_00083"/>
    </source>
</evidence>
<name>PTH_LACCB</name>
<proteinExistence type="inferred from homology"/>
<feature type="chain" id="PRO_1000092951" description="Peptidyl-tRNA hydrolase">
    <location>
        <begin position="1"/>
        <end position="185"/>
    </location>
</feature>
<feature type="active site" description="Proton acceptor" evidence="1">
    <location>
        <position position="19"/>
    </location>
</feature>
<feature type="binding site" evidence="1">
    <location>
        <position position="14"/>
    </location>
    <ligand>
        <name>tRNA</name>
        <dbReference type="ChEBI" id="CHEBI:17843"/>
    </ligand>
</feature>
<feature type="binding site" evidence="1">
    <location>
        <position position="64"/>
    </location>
    <ligand>
        <name>tRNA</name>
        <dbReference type="ChEBI" id="CHEBI:17843"/>
    </ligand>
</feature>
<feature type="binding site" evidence="1">
    <location>
        <position position="66"/>
    </location>
    <ligand>
        <name>tRNA</name>
        <dbReference type="ChEBI" id="CHEBI:17843"/>
    </ligand>
</feature>
<feature type="binding site" evidence="1">
    <location>
        <position position="112"/>
    </location>
    <ligand>
        <name>tRNA</name>
        <dbReference type="ChEBI" id="CHEBI:17843"/>
    </ligand>
</feature>
<feature type="site" description="Discriminates between blocked and unblocked aminoacyl-tRNA" evidence="1">
    <location>
        <position position="9"/>
    </location>
</feature>
<feature type="site" description="Stabilizes the basic form of H active site to accept a proton" evidence="1">
    <location>
        <position position="91"/>
    </location>
</feature>
<accession>B3WAP7</accession>
<keyword id="KW-0963">Cytoplasm</keyword>
<keyword id="KW-0378">Hydrolase</keyword>
<keyword id="KW-0694">RNA-binding</keyword>
<keyword id="KW-0820">tRNA-binding</keyword>
<sequence length="185" mass="20820">MKMIVGLGNPGQKYAGSKHNMGFMVVDGLAKRLNLTIDKLEFDAATATTRLNGEKIFLVKPQTFMNASGRAVRELMMFYQIQLDEIFVVQDDMDLTLGKLRLRKRGSAGGHNGIKDIISATGSDEFCRLKIGIQHPQRQRVVDWVLTPFSKTDQPLIDDAIEKADDALEDWLNGMPFDQLMNKFN</sequence>
<dbReference type="EC" id="3.1.1.29" evidence="1"/>
<dbReference type="EMBL" id="FM177140">
    <property type="protein sequence ID" value="CAQ67766.1"/>
    <property type="molecule type" value="Genomic_DNA"/>
</dbReference>
<dbReference type="SMR" id="B3WAP7"/>
<dbReference type="KEGG" id="lcb:LCABL_27150"/>
<dbReference type="HOGENOM" id="CLU_062456_4_1_9"/>
<dbReference type="GO" id="GO:0005737">
    <property type="term" value="C:cytoplasm"/>
    <property type="evidence" value="ECO:0007669"/>
    <property type="project" value="UniProtKB-SubCell"/>
</dbReference>
<dbReference type="GO" id="GO:0004045">
    <property type="term" value="F:peptidyl-tRNA hydrolase activity"/>
    <property type="evidence" value="ECO:0007669"/>
    <property type="project" value="UniProtKB-UniRule"/>
</dbReference>
<dbReference type="GO" id="GO:0000049">
    <property type="term" value="F:tRNA binding"/>
    <property type="evidence" value="ECO:0007669"/>
    <property type="project" value="UniProtKB-UniRule"/>
</dbReference>
<dbReference type="GO" id="GO:0006515">
    <property type="term" value="P:protein quality control for misfolded or incompletely synthesized proteins"/>
    <property type="evidence" value="ECO:0007669"/>
    <property type="project" value="UniProtKB-UniRule"/>
</dbReference>
<dbReference type="GO" id="GO:0072344">
    <property type="term" value="P:rescue of stalled ribosome"/>
    <property type="evidence" value="ECO:0007669"/>
    <property type="project" value="UniProtKB-UniRule"/>
</dbReference>
<dbReference type="CDD" id="cd00462">
    <property type="entry name" value="PTH"/>
    <property type="match status" value="1"/>
</dbReference>
<dbReference type="FunFam" id="3.40.50.1470:FF:000001">
    <property type="entry name" value="Peptidyl-tRNA hydrolase"/>
    <property type="match status" value="1"/>
</dbReference>
<dbReference type="Gene3D" id="3.40.50.1470">
    <property type="entry name" value="Peptidyl-tRNA hydrolase"/>
    <property type="match status" value="1"/>
</dbReference>
<dbReference type="HAMAP" id="MF_00083">
    <property type="entry name" value="Pept_tRNA_hydro_bact"/>
    <property type="match status" value="1"/>
</dbReference>
<dbReference type="InterPro" id="IPR001328">
    <property type="entry name" value="Pept_tRNA_hydro"/>
</dbReference>
<dbReference type="InterPro" id="IPR018171">
    <property type="entry name" value="Pept_tRNA_hydro_CS"/>
</dbReference>
<dbReference type="InterPro" id="IPR036416">
    <property type="entry name" value="Pept_tRNA_hydro_sf"/>
</dbReference>
<dbReference type="NCBIfam" id="TIGR00447">
    <property type="entry name" value="pth"/>
    <property type="match status" value="1"/>
</dbReference>
<dbReference type="PANTHER" id="PTHR17224">
    <property type="entry name" value="PEPTIDYL-TRNA HYDROLASE"/>
    <property type="match status" value="1"/>
</dbReference>
<dbReference type="PANTHER" id="PTHR17224:SF1">
    <property type="entry name" value="PEPTIDYL-TRNA HYDROLASE"/>
    <property type="match status" value="1"/>
</dbReference>
<dbReference type="Pfam" id="PF01195">
    <property type="entry name" value="Pept_tRNA_hydro"/>
    <property type="match status" value="1"/>
</dbReference>
<dbReference type="SUPFAM" id="SSF53178">
    <property type="entry name" value="Peptidyl-tRNA hydrolase-like"/>
    <property type="match status" value="1"/>
</dbReference>
<dbReference type="PROSITE" id="PS01196">
    <property type="entry name" value="PEPT_TRNA_HYDROL_2"/>
    <property type="match status" value="1"/>
</dbReference>
<comment type="function">
    <text evidence="1">Hydrolyzes ribosome-free peptidyl-tRNAs (with 1 or more amino acids incorporated), which drop off the ribosome during protein synthesis, or as a result of ribosome stalling.</text>
</comment>
<comment type="function">
    <text evidence="1">Catalyzes the release of premature peptidyl moieties from peptidyl-tRNA molecules trapped in stalled 50S ribosomal subunits, and thus maintains levels of free tRNAs and 50S ribosomes.</text>
</comment>
<comment type="catalytic activity">
    <reaction evidence="1">
        <text>an N-acyl-L-alpha-aminoacyl-tRNA + H2O = an N-acyl-L-amino acid + a tRNA + H(+)</text>
        <dbReference type="Rhea" id="RHEA:54448"/>
        <dbReference type="Rhea" id="RHEA-COMP:10123"/>
        <dbReference type="Rhea" id="RHEA-COMP:13883"/>
        <dbReference type="ChEBI" id="CHEBI:15377"/>
        <dbReference type="ChEBI" id="CHEBI:15378"/>
        <dbReference type="ChEBI" id="CHEBI:59874"/>
        <dbReference type="ChEBI" id="CHEBI:78442"/>
        <dbReference type="ChEBI" id="CHEBI:138191"/>
        <dbReference type="EC" id="3.1.1.29"/>
    </reaction>
</comment>
<comment type="subunit">
    <text evidence="1">Monomer.</text>
</comment>
<comment type="subcellular location">
    <subcellularLocation>
        <location evidence="1">Cytoplasm</location>
    </subcellularLocation>
</comment>
<comment type="similarity">
    <text evidence="1">Belongs to the PTH family.</text>
</comment>
<gene>
    <name evidence="1" type="primary">pth</name>
    <name type="ordered locus">LCABL_27150</name>
</gene>
<reference key="1">
    <citation type="submission" date="2008-06" db="EMBL/GenBank/DDBJ databases">
        <title>Lactobacillus casei BL23 complete genome sequence.</title>
        <authorList>
            <person name="Maze A."/>
            <person name="Boel G."/>
            <person name="Bourand A."/>
            <person name="Loux V."/>
            <person name="Gibrat J.F."/>
            <person name="Zuniga M."/>
            <person name="Hartke A."/>
            <person name="Deutscher J."/>
        </authorList>
    </citation>
    <scope>NUCLEOTIDE SEQUENCE [LARGE SCALE GENOMIC DNA]</scope>
    <source>
        <strain>BL23</strain>
    </source>
</reference>